<organism>
    <name type="scientific">Desulfosudis oleivorans (strain DSM 6200 / JCM 39069 / Hxd3)</name>
    <name type="common">Desulfococcus oleovorans</name>
    <dbReference type="NCBI Taxonomy" id="96561"/>
    <lineage>
        <taxon>Bacteria</taxon>
        <taxon>Pseudomonadati</taxon>
        <taxon>Thermodesulfobacteriota</taxon>
        <taxon>Desulfobacteria</taxon>
        <taxon>Desulfobacterales</taxon>
        <taxon>Desulfosudaceae</taxon>
        <taxon>Desulfosudis</taxon>
    </lineage>
</organism>
<sequence>MKCPYCGSLDNKVIDSRLSRDDTETRRRRECLECARRFTTYEHVEKAPLMIVKKDGRREEFLKDKVRSGMMSACQKRRISINIIEDFISELEQDLMEMGEHEIPSSIIGEKVMKKLHALDDVAYVRFASVYREFKDVHDFYSELKSLLKKQ</sequence>
<reference key="1">
    <citation type="submission" date="2007-10" db="EMBL/GenBank/DDBJ databases">
        <title>Complete sequence of Desulfococcus oleovorans Hxd3.</title>
        <authorList>
            <consortium name="US DOE Joint Genome Institute"/>
            <person name="Copeland A."/>
            <person name="Lucas S."/>
            <person name="Lapidus A."/>
            <person name="Barry K."/>
            <person name="Glavina del Rio T."/>
            <person name="Dalin E."/>
            <person name="Tice H."/>
            <person name="Pitluck S."/>
            <person name="Kiss H."/>
            <person name="Brettin T."/>
            <person name="Bruce D."/>
            <person name="Detter J.C."/>
            <person name="Han C."/>
            <person name="Schmutz J."/>
            <person name="Larimer F."/>
            <person name="Land M."/>
            <person name="Hauser L."/>
            <person name="Kyrpides N."/>
            <person name="Kim E."/>
            <person name="Wawrik B."/>
            <person name="Richardson P."/>
        </authorList>
    </citation>
    <scope>NUCLEOTIDE SEQUENCE [LARGE SCALE GENOMIC DNA]</scope>
    <source>
        <strain>DSM 6200 / JCM 39069 / Hxd3</strain>
    </source>
</reference>
<comment type="function">
    <text evidence="1">Negatively regulates transcription of bacterial ribonucleotide reductase nrd genes and operons by binding to NrdR-boxes.</text>
</comment>
<comment type="cofactor">
    <cofactor evidence="1">
        <name>Zn(2+)</name>
        <dbReference type="ChEBI" id="CHEBI:29105"/>
    </cofactor>
    <text evidence="1">Binds 1 zinc ion.</text>
</comment>
<comment type="similarity">
    <text evidence="1">Belongs to the NrdR family.</text>
</comment>
<keyword id="KW-0067">ATP-binding</keyword>
<keyword id="KW-0238">DNA-binding</keyword>
<keyword id="KW-0479">Metal-binding</keyword>
<keyword id="KW-0547">Nucleotide-binding</keyword>
<keyword id="KW-1185">Reference proteome</keyword>
<keyword id="KW-0678">Repressor</keyword>
<keyword id="KW-0804">Transcription</keyword>
<keyword id="KW-0805">Transcription regulation</keyword>
<keyword id="KW-0862">Zinc</keyword>
<keyword id="KW-0863">Zinc-finger</keyword>
<gene>
    <name evidence="1" type="primary">nrdR</name>
    <name type="ordered locus">Dole_2080</name>
</gene>
<accession>A8ZTV1</accession>
<name>NRDR_DESOH</name>
<evidence type="ECO:0000255" key="1">
    <source>
        <dbReference type="HAMAP-Rule" id="MF_00440"/>
    </source>
</evidence>
<proteinExistence type="inferred from homology"/>
<dbReference type="EMBL" id="CP000859">
    <property type="protein sequence ID" value="ABW67884.1"/>
    <property type="molecule type" value="Genomic_DNA"/>
</dbReference>
<dbReference type="RefSeq" id="WP_012175496.1">
    <property type="nucleotide sequence ID" value="NC_009943.1"/>
</dbReference>
<dbReference type="SMR" id="A8ZTV1"/>
<dbReference type="STRING" id="96561.Dole_2080"/>
<dbReference type="KEGG" id="dol:Dole_2080"/>
<dbReference type="eggNOG" id="COG1327">
    <property type="taxonomic scope" value="Bacteria"/>
</dbReference>
<dbReference type="HOGENOM" id="CLU_108412_0_0_7"/>
<dbReference type="OrthoDB" id="9807461at2"/>
<dbReference type="Proteomes" id="UP000008561">
    <property type="component" value="Chromosome"/>
</dbReference>
<dbReference type="GO" id="GO:0005524">
    <property type="term" value="F:ATP binding"/>
    <property type="evidence" value="ECO:0007669"/>
    <property type="project" value="UniProtKB-KW"/>
</dbReference>
<dbReference type="GO" id="GO:0003677">
    <property type="term" value="F:DNA binding"/>
    <property type="evidence" value="ECO:0007669"/>
    <property type="project" value="UniProtKB-KW"/>
</dbReference>
<dbReference type="GO" id="GO:0008270">
    <property type="term" value="F:zinc ion binding"/>
    <property type="evidence" value="ECO:0007669"/>
    <property type="project" value="UniProtKB-UniRule"/>
</dbReference>
<dbReference type="GO" id="GO:0045892">
    <property type="term" value="P:negative regulation of DNA-templated transcription"/>
    <property type="evidence" value="ECO:0007669"/>
    <property type="project" value="UniProtKB-UniRule"/>
</dbReference>
<dbReference type="HAMAP" id="MF_00440">
    <property type="entry name" value="NrdR"/>
    <property type="match status" value="1"/>
</dbReference>
<dbReference type="InterPro" id="IPR005144">
    <property type="entry name" value="ATP-cone_dom"/>
</dbReference>
<dbReference type="InterPro" id="IPR055173">
    <property type="entry name" value="NrdR-like_N"/>
</dbReference>
<dbReference type="InterPro" id="IPR003796">
    <property type="entry name" value="RNR_NrdR-like"/>
</dbReference>
<dbReference type="NCBIfam" id="TIGR00244">
    <property type="entry name" value="transcriptional regulator NrdR"/>
    <property type="match status" value="1"/>
</dbReference>
<dbReference type="PANTHER" id="PTHR30455">
    <property type="entry name" value="TRANSCRIPTIONAL REPRESSOR NRDR"/>
    <property type="match status" value="1"/>
</dbReference>
<dbReference type="PANTHER" id="PTHR30455:SF2">
    <property type="entry name" value="TRANSCRIPTIONAL REPRESSOR NRDR"/>
    <property type="match status" value="1"/>
</dbReference>
<dbReference type="Pfam" id="PF03477">
    <property type="entry name" value="ATP-cone"/>
    <property type="match status" value="1"/>
</dbReference>
<dbReference type="Pfam" id="PF22811">
    <property type="entry name" value="Zn_ribbon_NrdR"/>
    <property type="match status" value="1"/>
</dbReference>
<dbReference type="PROSITE" id="PS51161">
    <property type="entry name" value="ATP_CONE"/>
    <property type="match status" value="1"/>
</dbReference>
<feature type="chain" id="PRO_1000124495" description="Transcriptional repressor NrdR">
    <location>
        <begin position="1"/>
        <end position="151"/>
    </location>
</feature>
<feature type="domain" description="ATP-cone" evidence="1">
    <location>
        <begin position="49"/>
        <end position="139"/>
    </location>
</feature>
<feature type="zinc finger region" evidence="1">
    <location>
        <begin position="3"/>
        <end position="34"/>
    </location>
</feature>
<protein>
    <recommendedName>
        <fullName evidence="1">Transcriptional repressor NrdR</fullName>
    </recommendedName>
</protein>